<protein>
    <recommendedName>
        <fullName>Spermatogenesis-associated protein 31D3</fullName>
    </recommendedName>
    <alternativeName>
        <fullName>Protein FAM75D3</fullName>
    </alternativeName>
</protein>
<comment type="function">
    <text evidence="1">May play a role in spermatogenesis.</text>
</comment>
<comment type="subcellular location">
    <subcellularLocation>
        <location evidence="4">Membrane</location>
        <topology evidence="4">Single-pass membrane protein</topology>
    </subcellularLocation>
</comment>
<comment type="similarity">
    <text evidence="4">Belongs to the SPATA31 family.</text>
</comment>
<comment type="sequence caution" evidence="4">
    <conflict type="frameshift">
        <sequence resource="EMBL" id="AK126070"/>
    </conflict>
</comment>
<comment type="sequence caution" evidence="4">
    <conflict type="frameshift">
        <sequence resource="EMBL" id="AK308327"/>
    </conflict>
</comment>
<proteinExistence type="evidence at transcript level"/>
<keyword id="KW-0221">Differentiation</keyword>
<keyword id="KW-0472">Membrane</keyword>
<keyword id="KW-1185">Reference proteome</keyword>
<keyword id="KW-0744">Spermatogenesis</keyword>
<keyword id="KW-0812">Transmembrane</keyword>
<keyword id="KW-1133">Transmembrane helix</keyword>
<accession>P0C874</accession>
<feature type="chain" id="PRO_0000349241" description="Spermatogenesis-associated protein 31D3">
    <location>
        <begin position="1"/>
        <end position="917"/>
    </location>
</feature>
<feature type="transmembrane region" description="Helical" evidence="2">
    <location>
        <begin position="29"/>
        <end position="49"/>
    </location>
</feature>
<feature type="region of interest" description="Disordered" evidence="3">
    <location>
        <begin position="55"/>
        <end position="80"/>
    </location>
</feature>
<feature type="region of interest" description="Disordered" evidence="3">
    <location>
        <begin position="152"/>
        <end position="195"/>
    </location>
</feature>
<feature type="region of interest" description="Disordered" evidence="3">
    <location>
        <begin position="773"/>
        <end position="797"/>
    </location>
</feature>
<feature type="compositionally biased region" description="Basic residues" evidence="3">
    <location>
        <begin position="63"/>
        <end position="74"/>
    </location>
</feature>
<feature type="compositionally biased region" description="Low complexity" evidence="3">
    <location>
        <begin position="152"/>
        <end position="163"/>
    </location>
</feature>
<feature type="compositionally biased region" description="Polar residues" evidence="3">
    <location>
        <begin position="164"/>
        <end position="177"/>
    </location>
</feature>
<feature type="compositionally biased region" description="Basic and acidic residues" evidence="3">
    <location>
        <begin position="782"/>
        <end position="797"/>
    </location>
</feature>
<feature type="sequence conflict" description="In Ref. 1; AK308327." evidence="4" ref="1">
    <original>G</original>
    <variation>R</variation>
    <location>
        <position position="389"/>
    </location>
</feature>
<feature type="sequence conflict" description="In Ref. 1; AK308327." evidence="4" ref="1">
    <original>S</original>
    <variation>F</variation>
    <location>
        <position position="541"/>
    </location>
</feature>
<organism>
    <name type="scientific">Homo sapiens</name>
    <name type="common">Human</name>
    <dbReference type="NCBI Taxonomy" id="9606"/>
    <lineage>
        <taxon>Eukaryota</taxon>
        <taxon>Metazoa</taxon>
        <taxon>Chordata</taxon>
        <taxon>Craniata</taxon>
        <taxon>Vertebrata</taxon>
        <taxon>Euteleostomi</taxon>
        <taxon>Mammalia</taxon>
        <taxon>Eutheria</taxon>
        <taxon>Euarchontoglires</taxon>
        <taxon>Primates</taxon>
        <taxon>Haplorrhini</taxon>
        <taxon>Catarrhini</taxon>
        <taxon>Hominidae</taxon>
        <taxon>Homo</taxon>
    </lineage>
</organism>
<name>S31D3_HUMAN</name>
<gene>
    <name type="primary">SPATA31D3</name>
    <name type="synonym">FAM75D3</name>
</gene>
<evidence type="ECO:0000250" key="1"/>
<evidence type="ECO:0000255" key="2"/>
<evidence type="ECO:0000256" key="3">
    <source>
        <dbReference type="SAM" id="MobiDB-lite"/>
    </source>
</evidence>
<evidence type="ECO:0000305" key="4"/>
<sequence length="917" mass="102419">MENILCFLNSYTETGLSPDSHCLDIDLNFICLSGLGLFILYLFYMVLTLYSSPTEKNNDTQKHQGRARRKRKSVTFKDRKSLQKEAEEERKLHSFLKSFGPPVSCSPLGQHHDTTLFRRLLCPDPVCRVCNRATADIQRLLSWESLKDAAPSVSPLASSASGAESSFTLASTPSATTPEDLILSSRPKPSPPPPLILSPDLITTLADLFSPSPLRDPLPPQPVSPLDSKFPIDHSPPQQLPFPLLPPHHIERVEPSLQPEASLSLNTIFSFGSTLCQDISQAVNRTDSCARHHGPPTPSALPPEDCTVTQSKSNLTVLKTFPEMLSLGGSGGSSTSAPTTKGIDHSCPASSEFSWWQPHAKDSFSSNFVPSDFMEELLTLHSSEASLGGHSVANIIQPVNISFLSHDIPALLERQVKRRGDFLMWKENGKKPGSFPTQLRPNYQLNSSRNMLTSTAVKHDLAESFPFWASKGKLEWQHIHQQPPYSKCFEDHLEQKYVQLFWGLPSLHSESLHPTVFVQHGRSSMFVFFNGITNTSMSHESPVLPPPQPLFLPSTQPLPLPQTLPRGQSLHLTQVKSLAQPQSPFPALPPSPLFLIRVCGVCFHRPQNEARSLMPSEINHLEWNVLQKVQESVWGLPSVVQKSQEDFCPPAPNPVLVRKSFKVHVPISIIPGDFPLSSEVRKKLEQHIRKRLIQRRWGLPRRIHESLSLLRPQNKISELSVSESIHGPLNISLVEGQRCNVLKKSASSFPRSFHERSSNMLSMENVGNYQGCSQETAPKNHLLHDPETSSEEDLRSNSERDLGTHMMHLSGNDSGVRLGQKQLENALTVHLSKKFEEINEGRMPGTVHSSWHSVKQTICLPEKSHSQIKHRNLAALVSEDHRVDTSQEMSFLSSNKQKMLEAHIKSFHMKPILNLSI</sequence>
<reference key="1">
    <citation type="journal article" date="2004" name="Nat. Genet.">
        <title>Complete sequencing and characterization of 21,243 full-length human cDNAs.</title>
        <authorList>
            <person name="Ota T."/>
            <person name="Suzuki Y."/>
            <person name="Nishikawa T."/>
            <person name="Otsuki T."/>
            <person name="Sugiyama T."/>
            <person name="Irie R."/>
            <person name="Wakamatsu A."/>
            <person name="Hayashi K."/>
            <person name="Sato H."/>
            <person name="Nagai K."/>
            <person name="Kimura K."/>
            <person name="Makita H."/>
            <person name="Sekine M."/>
            <person name="Obayashi M."/>
            <person name="Nishi T."/>
            <person name="Shibahara T."/>
            <person name="Tanaka T."/>
            <person name="Ishii S."/>
            <person name="Yamamoto J."/>
            <person name="Saito K."/>
            <person name="Kawai Y."/>
            <person name="Isono Y."/>
            <person name="Nakamura Y."/>
            <person name="Nagahari K."/>
            <person name="Murakami K."/>
            <person name="Yasuda T."/>
            <person name="Iwayanagi T."/>
            <person name="Wagatsuma M."/>
            <person name="Shiratori A."/>
            <person name="Sudo H."/>
            <person name="Hosoiri T."/>
            <person name="Kaku Y."/>
            <person name="Kodaira H."/>
            <person name="Kondo H."/>
            <person name="Sugawara M."/>
            <person name="Takahashi M."/>
            <person name="Kanda K."/>
            <person name="Yokoi T."/>
            <person name="Furuya T."/>
            <person name="Kikkawa E."/>
            <person name="Omura Y."/>
            <person name="Abe K."/>
            <person name="Kamihara K."/>
            <person name="Katsuta N."/>
            <person name="Sato K."/>
            <person name="Tanikawa M."/>
            <person name="Yamazaki M."/>
            <person name="Ninomiya K."/>
            <person name="Ishibashi T."/>
            <person name="Yamashita H."/>
            <person name="Murakawa K."/>
            <person name="Fujimori K."/>
            <person name="Tanai H."/>
            <person name="Kimata M."/>
            <person name="Watanabe M."/>
            <person name="Hiraoka S."/>
            <person name="Chiba Y."/>
            <person name="Ishida S."/>
            <person name="Ono Y."/>
            <person name="Takiguchi S."/>
            <person name="Watanabe S."/>
            <person name="Yosida M."/>
            <person name="Hotuta T."/>
            <person name="Kusano J."/>
            <person name="Kanehori K."/>
            <person name="Takahashi-Fujii A."/>
            <person name="Hara H."/>
            <person name="Tanase T.-O."/>
            <person name="Nomura Y."/>
            <person name="Togiya S."/>
            <person name="Komai F."/>
            <person name="Hara R."/>
            <person name="Takeuchi K."/>
            <person name="Arita M."/>
            <person name="Imose N."/>
            <person name="Musashino K."/>
            <person name="Yuuki H."/>
            <person name="Oshima A."/>
            <person name="Sasaki N."/>
            <person name="Aotsuka S."/>
            <person name="Yoshikawa Y."/>
            <person name="Matsunawa H."/>
            <person name="Ichihara T."/>
            <person name="Shiohata N."/>
            <person name="Sano S."/>
            <person name="Moriya S."/>
            <person name="Momiyama H."/>
            <person name="Satoh N."/>
            <person name="Takami S."/>
            <person name="Terashima Y."/>
            <person name="Suzuki O."/>
            <person name="Nakagawa S."/>
            <person name="Senoh A."/>
            <person name="Mizoguchi H."/>
            <person name="Goto Y."/>
            <person name="Shimizu F."/>
            <person name="Wakebe H."/>
            <person name="Hishigaki H."/>
            <person name="Watanabe T."/>
            <person name="Sugiyama A."/>
            <person name="Takemoto M."/>
            <person name="Kawakami B."/>
            <person name="Yamazaki M."/>
            <person name="Watanabe K."/>
            <person name="Kumagai A."/>
            <person name="Itakura S."/>
            <person name="Fukuzumi Y."/>
            <person name="Fujimori Y."/>
            <person name="Komiyama M."/>
            <person name="Tashiro H."/>
            <person name="Tanigami A."/>
            <person name="Fujiwara T."/>
            <person name="Ono T."/>
            <person name="Yamada K."/>
            <person name="Fujii Y."/>
            <person name="Ozaki K."/>
            <person name="Hirao M."/>
            <person name="Ohmori Y."/>
            <person name="Kawabata A."/>
            <person name="Hikiji T."/>
            <person name="Kobatake N."/>
            <person name="Inagaki H."/>
            <person name="Ikema Y."/>
            <person name="Okamoto S."/>
            <person name="Okitani R."/>
            <person name="Kawakami T."/>
            <person name="Noguchi S."/>
            <person name="Itoh T."/>
            <person name="Shigeta K."/>
            <person name="Senba T."/>
            <person name="Matsumura K."/>
            <person name="Nakajima Y."/>
            <person name="Mizuno T."/>
            <person name="Morinaga M."/>
            <person name="Sasaki M."/>
            <person name="Togashi T."/>
            <person name="Oyama M."/>
            <person name="Hata H."/>
            <person name="Watanabe M."/>
            <person name="Komatsu T."/>
            <person name="Mizushima-Sugano J."/>
            <person name="Satoh T."/>
            <person name="Shirai Y."/>
            <person name="Takahashi Y."/>
            <person name="Nakagawa K."/>
            <person name="Okumura K."/>
            <person name="Nagase T."/>
            <person name="Nomura N."/>
            <person name="Kikuchi H."/>
            <person name="Masuho Y."/>
            <person name="Yamashita R."/>
            <person name="Nakai K."/>
            <person name="Yada T."/>
            <person name="Nakamura Y."/>
            <person name="Ohara O."/>
            <person name="Isogai T."/>
            <person name="Sugano S."/>
        </authorList>
    </citation>
    <scope>NUCLEOTIDE SEQUENCE [LARGE SCALE MRNA]</scope>
    <source>
        <tissue>Testis</tissue>
    </source>
</reference>
<reference key="2">
    <citation type="journal article" date="2004" name="Nature">
        <title>DNA sequence and analysis of human chromosome 9.</title>
        <authorList>
            <person name="Humphray S.J."/>
            <person name="Oliver K."/>
            <person name="Hunt A.R."/>
            <person name="Plumb R.W."/>
            <person name="Loveland J.E."/>
            <person name="Howe K.L."/>
            <person name="Andrews T.D."/>
            <person name="Searle S."/>
            <person name="Hunt S.E."/>
            <person name="Scott C.E."/>
            <person name="Jones M.C."/>
            <person name="Ainscough R."/>
            <person name="Almeida J.P."/>
            <person name="Ambrose K.D."/>
            <person name="Ashwell R.I.S."/>
            <person name="Babbage A.K."/>
            <person name="Babbage S."/>
            <person name="Bagguley C.L."/>
            <person name="Bailey J."/>
            <person name="Banerjee R."/>
            <person name="Barker D.J."/>
            <person name="Barlow K.F."/>
            <person name="Bates K."/>
            <person name="Beasley H."/>
            <person name="Beasley O."/>
            <person name="Bird C.P."/>
            <person name="Bray-Allen S."/>
            <person name="Brown A.J."/>
            <person name="Brown J.Y."/>
            <person name="Burford D."/>
            <person name="Burrill W."/>
            <person name="Burton J."/>
            <person name="Carder C."/>
            <person name="Carter N.P."/>
            <person name="Chapman J.C."/>
            <person name="Chen Y."/>
            <person name="Clarke G."/>
            <person name="Clark S.Y."/>
            <person name="Clee C.M."/>
            <person name="Clegg S."/>
            <person name="Collier R.E."/>
            <person name="Corby N."/>
            <person name="Crosier M."/>
            <person name="Cummings A.T."/>
            <person name="Davies J."/>
            <person name="Dhami P."/>
            <person name="Dunn M."/>
            <person name="Dutta I."/>
            <person name="Dyer L.W."/>
            <person name="Earthrowl M.E."/>
            <person name="Faulkner L."/>
            <person name="Fleming C.J."/>
            <person name="Frankish A."/>
            <person name="Frankland J.A."/>
            <person name="French L."/>
            <person name="Fricker D.G."/>
            <person name="Garner P."/>
            <person name="Garnett J."/>
            <person name="Ghori J."/>
            <person name="Gilbert J.G.R."/>
            <person name="Glison C."/>
            <person name="Grafham D.V."/>
            <person name="Gribble S."/>
            <person name="Griffiths C."/>
            <person name="Griffiths-Jones S."/>
            <person name="Grocock R."/>
            <person name="Guy J."/>
            <person name="Hall R.E."/>
            <person name="Hammond S."/>
            <person name="Harley J.L."/>
            <person name="Harrison E.S.I."/>
            <person name="Hart E.A."/>
            <person name="Heath P.D."/>
            <person name="Henderson C.D."/>
            <person name="Hopkins B.L."/>
            <person name="Howard P.J."/>
            <person name="Howden P.J."/>
            <person name="Huckle E."/>
            <person name="Johnson C."/>
            <person name="Johnson D."/>
            <person name="Joy A.A."/>
            <person name="Kay M."/>
            <person name="Keenan S."/>
            <person name="Kershaw J.K."/>
            <person name="Kimberley A.M."/>
            <person name="King A."/>
            <person name="Knights A."/>
            <person name="Laird G.K."/>
            <person name="Langford C."/>
            <person name="Lawlor S."/>
            <person name="Leongamornlert D.A."/>
            <person name="Leversha M."/>
            <person name="Lloyd C."/>
            <person name="Lloyd D.M."/>
            <person name="Lovell J."/>
            <person name="Martin S."/>
            <person name="Mashreghi-Mohammadi M."/>
            <person name="Matthews L."/>
            <person name="McLaren S."/>
            <person name="McLay K.E."/>
            <person name="McMurray A."/>
            <person name="Milne S."/>
            <person name="Nickerson T."/>
            <person name="Nisbett J."/>
            <person name="Nordsiek G."/>
            <person name="Pearce A.V."/>
            <person name="Peck A.I."/>
            <person name="Porter K.M."/>
            <person name="Pandian R."/>
            <person name="Pelan S."/>
            <person name="Phillimore B."/>
            <person name="Povey S."/>
            <person name="Ramsey Y."/>
            <person name="Rand V."/>
            <person name="Scharfe M."/>
            <person name="Sehra H.K."/>
            <person name="Shownkeen R."/>
            <person name="Sims S.K."/>
            <person name="Skuce C.D."/>
            <person name="Smith M."/>
            <person name="Steward C.A."/>
            <person name="Swarbreck D."/>
            <person name="Sycamore N."/>
            <person name="Tester J."/>
            <person name="Thorpe A."/>
            <person name="Tracey A."/>
            <person name="Tromans A."/>
            <person name="Thomas D.W."/>
            <person name="Wall M."/>
            <person name="Wallis J.M."/>
            <person name="West A.P."/>
            <person name="Whitehead S.L."/>
            <person name="Willey D.L."/>
            <person name="Williams S.A."/>
            <person name="Wilming L."/>
            <person name="Wray P.W."/>
            <person name="Young L."/>
            <person name="Ashurst J.L."/>
            <person name="Coulson A."/>
            <person name="Blocker H."/>
            <person name="Durbin R.M."/>
            <person name="Sulston J.E."/>
            <person name="Hubbard T."/>
            <person name="Jackson M.J."/>
            <person name="Bentley D.R."/>
            <person name="Beck S."/>
            <person name="Rogers J."/>
            <person name="Dunham I."/>
        </authorList>
    </citation>
    <scope>NUCLEOTIDE SEQUENCE [LARGE SCALE GENOMIC DNA]</scope>
</reference>
<dbReference type="EMBL" id="AK126070">
    <property type="status" value="NOT_ANNOTATED_CDS"/>
    <property type="molecule type" value="mRNA"/>
</dbReference>
<dbReference type="EMBL" id="AK308327">
    <property type="status" value="NOT_ANNOTATED_CDS"/>
    <property type="molecule type" value="mRNA"/>
</dbReference>
<dbReference type="EMBL" id="AL158154">
    <property type="status" value="NOT_ANNOTATED_CDS"/>
    <property type="molecule type" value="Genomic_DNA"/>
</dbReference>
<dbReference type="CCDS" id="CCDS83380.1"/>
<dbReference type="RefSeq" id="NP_997299.2">
    <property type="nucleotide sequence ID" value="NM_207416.3"/>
</dbReference>
<dbReference type="BioGRID" id="133259">
    <property type="interactions" value="2"/>
</dbReference>
<dbReference type="FunCoup" id="P0C874">
    <property type="interactions" value="9"/>
</dbReference>
<dbReference type="IntAct" id="P0C874">
    <property type="interactions" value="1"/>
</dbReference>
<dbReference type="STRING" id="9606.ENSP00000488117"/>
<dbReference type="GlyGen" id="P0C874">
    <property type="glycosylation" value="2 sites, 1 O-linked glycan (1 site)"/>
</dbReference>
<dbReference type="iPTMnet" id="P0C874"/>
<dbReference type="PhosphoSitePlus" id="P0C874"/>
<dbReference type="BioMuta" id="SPATA31D3"/>
<dbReference type="DMDM" id="205831115"/>
<dbReference type="jPOST" id="P0C874"/>
<dbReference type="MassIVE" id="P0C874"/>
<dbReference type="PeptideAtlas" id="P0C874"/>
<dbReference type="ProteomicsDB" id="52409"/>
<dbReference type="DNASU" id="389762"/>
<dbReference type="Ensembl" id="ENST00000445385.3">
    <property type="protein sequence ID" value="ENSP00000488117.1"/>
    <property type="gene ID" value="ENSG00000186788.14"/>
</dbReference>
<dbReference type="GeneID" id="389762"/>
<dbReference type="KEGG" id="hsa:389762"/>
<dbReference type="MANE-Select" id="ENST00000445385.3">
    <property type="protein sequence ID" value="ENSP00000488117.1"/>
    <property type="RefSeq nucleotide sequence ID" value="NM_207416.3"/>
    <property type="RefSeq protein sequence ID" value="NP_997299.2"/>
</dbReference>
<dbReference type="AGR" id="HGNC:38603"/>
<dbReference type="CTD" id="389762"/>
<dbReference type="GeneCards" id="SPATA31D3"/>
<dbReference type="HGNC" id="HGNC:38603">
    <property type="gene designation" value="SPATA31D3"/>
</dbReference>
<dbReference type="HPA" id="ENSG00000186788">
    <property type="expression patterns" value="Tissue enriched (testis)"/>
</dbReference>
<dbReference type="neXtProt" id="NX_P0C874"/>
<dbReference type="VEuPathDB" id="HostDB:ENSG00000186788"/>
<dbReference type="GeneTree" id="ENSGT00950000183043"/>
<dbReference type="HOGENOM" id="CLU_007854_1_0_1"/>
<dbReference type="InParanoid" id="P0C874"/>
<dbReference type="OMA" id="FLMCKES"/>
<dbReference type="OrthoDB" id="9538932at2759"/>
<dbReference type="PAN-GO" id="P0C874">
    <property type="GO annotations" value="0 GO annotations based on evolutionary models"/>
</dbReference>
<dbReference type="BioGRID-ORCS" id="389762">
    <property type="hits" value="5 hits in 217 CRISPR screens"/>
</dbReference>
<dbReference type="GenomeRNAi" id="389762"/>
<dbReference type="Pharos" id="P0C874">
    <property type="development level" value="Tdark"/>
</dbReference>
<dbReference type="PRO" id="PR:P0C874"/>
<dbReference type="Proteomes" id="UP000005640">
    <property type="component" value="Chromosome 9"/>
</dbReference>
<dbReference type="RNAct" id="P0C874">
    <property type="molecule type" value="protein"/>
</dbReference>
<dbReference type="Bgee" id="ENSG00000186788">
    <property type="expression patterns" value="Expressed in male germ line stem cell (sensu Vertebrata) in testis and 6 other cell types or tissues"/>
</dbReference>
<dbReference type="GO" id="GO:0016020">
    <property type="term" value="C:membrane"/>
    <property type="evidence" value="ECO:0007669"/>
    <property type="project" value="UniProtKB-SubCell"/>
</dbReference>
<dbReference type="GO" id="GO:0030154">
    <property type="term" value="P:cell differentiation"/>
    <property type="evidence" value="ECO:0007669"/>
    <property type="project" value="UniProtKB-KW"/>
</dbReference>
<dbReference type="GO" id="GO:0007283">
    <property type="term" value="P:spermatogenesis"/>
    <property type="evidence" value="ECO:0007669"/>
    <property type="project" value="UniProtKB-KW"/>
</dbReference>
<dbReference type="InterPro" id="IPR039509">
    <property type="entry name" value="SPATA31"/>
</dbReference>
<dbReference type="InterPro" id="IPR027970">
    <property type="entry name" value="SPATA31F3-like"/>
</dbReference>
<dbReference type="PANTHER" id="PTHR21859">
    <property type="entry name" value="ACROSOME-SPECIFIC PROTEIN"/>
    <property type="match status" value="1"/>
</dbReference>
<dbReference type="PANTHER" id="PTHR21859:SF50">
    <property type="entry name" value="SPERMATOGENESIS-ASSOCIATED PROTEIN 31D3-RELATED"/>
    <property type="match status" value="1"/>
</dbReference>
<dbReference type="Pfam" id="PF15371">
    <property type="entry name" value="DUF4599"/>
    <property type="match status" value="1"/>
</dbReference>
<dbReference type="Pfam" id="PF14650">
    <property type="entry name" value="FAM75"/>
    <property type="match status" value="1"/>
</dbReference>